<evidence type="ECO:0000255" key="1">
    <source>
        <dbReference type="HAMAP-Rule" id="MF_00598"/>
    </source>
</evidence>
<proteinExistence type="inferred from homology"/>
<organism>
    <name type="scientific">Bordetella petrii (strain ATCC BAA-461 / DSM 12804 / CCUG 43448)</name>
    <dbReference type="NCBI Taxonomy" id="340100"/>
    <lineage>
        <taxon>Bacteria</taxon>
        <taxon>Pseudomonadati</taxon>
        <taxon>Pseudomonadota</taxon>
        <taxon>Betaproteobacteria</taxon>
        <taxon>Burkholderiales</taxon>
        <taxon>Alcaligenaceae</taxon>
        <taxon>Bordetella</taxon>
    </lineage>
</organism>
<comment type="similarity">
    <text evidence="1">Belongs to the Smg family.</text>
</comment>
<gene>
    <name evidence="1" type="primary">smg</name>
    <name type="ordered locus">Bpet0038</name>
</gene>
<dbReference type="EMBL" id="AM902716">
    <property type="protein sequence ID" value="CAP40369.1"/>
    <property type="molecule type" value="Genomic_DNA"/>
</dbReference>
<dbReference type="SMR" id="A9HVN4"/>
<dbReference type="STRING" id="94624.Bpet0038"/>
<dbReference type="KEGG" id="bpt:Bpet0038"/>
<dbReference type="eggNOG" id="COG2922">
    <property type="taxonomic scope" value="Bacteria"/>
</dbReference>
<dbReference type="Proteomes" id="UP000001225">
    <property type="component" value="Chromosome"/>
</dbReference>
<dbReference type="HAMAP" id="MF_00598">
    <property type="entry name" value="Smg"/>
    <property type="match status" value="1"/>
</dbReference>
<dbReference type="InterPro" id="IPR007456">
    <property type="entry name" value="Smg"/>
</dbReference>
<dbReference type="PANTHER" id="PTHR38692">
    <property type="entry name" value="PROTEIN SMG"/>
    <property type="match status" value="1"/>
</dbReference>
<dbReference type="PANTHER" id="PTHR38692:SF1">
    <property type="entry name" value="PROTEIN SMG"/>
    <property type="match status" value="1"/>
</dbReference>
<dbReference type="Pfam" id="PF04361">
    <property type="entry name" value="DUF494"/>
    <property type="match status" value="1"/>
</dbReference>
<name>SMG_BORPD</name>
<protein>
    <recommendedName>
        <fullName evidence="1">Protein Smg homolog</fullName>
    </recommendedName>
</protein>
<accession>A9HVN4</accession>
<sequence>MFDILVYLFENYYTPQACPAADVLAKRLAAAGFEHEDIDDALGWLYGLAETTERCVDLAQAPSSGIRIYTDSEYQQLGTESIGFIAFLESAGVLPAPLREIVIDRALAAPETPVSLAKTKIIALMVLWSQEAEIDNLVLEELLDDDGARRLH</sequence>
<reference key="1">
    <citation type="journal article" date="2008" name="BMC Genomics">
        <title>The missing link: Bordetella petrii is endowed with both the metabolic versatility of environmental bacteria and virulence traits of pathogenic Bordetellae.</title>
        <authorList>
            <person name="Gross R."/>
            <person name="Guzman C.A."/>
            <person name="Sebaihia M."/>
            <person name="Martin dos Santos V.A.P."/>
            <person name="Pieper D.H."/>
            <person name="Koebnik R."/>
            <person name="Lechner M."/>
            <person name="Bartels D."/>
            <person name="Buhrmester J."/>
            <person name="Choudhuri J.V."/>
            <person name="Ebensen T."/>
            <person name="Gaigalat L."/>
            <person name="Herrmann S."/>
            <person name="Khachane A.N."/>
            <person name="Larisch C."/>
            <person name="Link S."/>
            <person name="Linke B."/>
            <person name="Meyer F."/>
            <person name="Mormann S."/>
            <person name="Nakunst D."/>
            <person name="Rueckert C."/>
            <person name="Schneiker-Bekel S."/>
            <person name="Schulze K."/>
            <person name="Voerholter F.-J."/>
            <person name="Yevsa T."/>
            <person name="Engle J.T."/>
            <person name="Goldman W.E."/>
            <person name="Puehler A."/>
            <person name="Goebel U.B."/>
            <person name="Goesmann A."/>
            <person name="Bloecker H."/>
            <person name="Kaiser O."/>
            <person name="Martinez-Arias R."/>
        </authorList>
    </citation>
    <scope>NUCLEOTIDE SEQUENCE [LARGE SCALE GENOMIC DNA]</scope>
    <source>
        <strain>ATCC BAA-461 / DSM 12804 / CCUG 43448</strain>
    </source>
</reference>
<feature type="chain" id="PRO_1000129883" description="Protein Smg homolog">
    <location>
        <begin position="1"/>
        <end position="152"/>
    </location>
</feature>